<keyword id="KW-0233">DNA recombination</keyword>
<keyword id="KW-1185">Reference proteome</keyword>
<keyword id="KW-0814">Transposable element</keyword>
<keyword id="KW-0815">Transposition</keyword>
<proteinExistence type="inferred from homology"/>
<name>INSB_HAEDU</name>
<dbReference type="EMBL" id="AE017143">
    <property type="protein sequence ID" value="AAP96687.1"/>
    <property type="molecule type" value="Genomic_DNA"/>
</dbReference>
<dbReference type="STRING" id="233412.HD_1970"/>
<dbReference type="KEGG" id="hdu:HD_1970"/>
<dbReference type="eggNOG" id="COG1662">
    <property type="taxonomic scope" value="Bacteria"/>
</dbReference>
<dbReference type="HOGENOM" id="CLU_076276_2_0_6"/>
<dbReference type="Proteomes" id="UP000001022">
    <property type="component" value="Chromosome"/>
</dbReference>
<dbReference type="GO" id="GO:0003677">
    <property type="term" value="F:DNA binding"/>
    <property type="evidence" value="ECO:0007669"/>
    <property type="project" value="InterPro"/>
</dbReference>
<dbReference type="GO" id="GO:0004803">
    <property type="term" value="F:transposase activity"/>
    <property type="evidence" value="ECO:0007669"/>
    <property type="project" value="InterPro"/>
</dbReference>
<dbReference type="GO" id="GO:0006313">
    <property type="term" value="P:DNA transposition"/>
    <property type="evidence" value="ECO:0007669"/>
    <property type="project" value="InterPro"/>
</dbReference>
<dbReference type="InterPro" id="IPR005063">
    <property type="entry name" value="Transposase_27"/>
</dbReference>
<dbReference type="InterPro" id="IPR051354">
    <property type="entry name" value="Transposase_27_IS1"/>
</dbReference>
<dbReference type="NCBIfam" id="NF033558">
    <property type="entry name" value="transpos_IS1"/>
    <property type="match status" value="1"/>
</dbReference>
<dbReference type="PANTHER" id="PTHR33293">
    <property type="entry name" value="INSERTION ELEMENT IS1 1 PROTEIN INSB-RELATED"/>
    <property type="match status" value="1"/>
</dbReference>
<dbReference type="PANTHER" id="PTHR33293:SF1">
    <property type="entry name" value="INSERTION ELEMENT IS1 1 PROTEIN INSB-RELATED"/>
    <property type="match status" value="1"/>
</dbReference>
<dbReference type="Pfam" id="PF03400">
    <property type="entry name" value="DDE_Tnp_IS1"/>
    <property type="match status" value="1"/>
</dbReference>
<reference key="1">
    <citation type="submission" date="2003-06" db="EMBL/GenBank/DDBJ databases">
        <title>The complete genome sequence of Haemophilus ducreyi.</title>
        <authorList>
            <person name="Munson R.S. Jr."/>
            <person name="Ray W.C."/>
            <person name="Mahairas G."/>
            <person name="Sabo P."/>
            <person name="Mungur R."/>
            <person name="Johnson L."/>
            <person name="Nguyen D."/>
            <person name="Wang J."/>
            <person name="Forst C."/>
            <person name="Hood L."/>
        </authorList>
    </citation>
    <scope>NUCLEOTIDE SEQUENCE [LARGE SCALE GENOMIC DNA]</scope>
    <source>
        <strain>35000HP / ATCC 700724</strain>
    </source>
</reference>
<feature type="chain" id="PRO_0000075408" description="Insertion element IS1 protein InsB">
    <location>
        <begin position="1"/>
        <end position="167"/>
    </location>
</feature>
<sequence>MPGNSPHYGRWPQHDFTSLKKLRPQSVTSRIQPGSDVIVCAEMDEQWGYVGAKSRQRWLFYAYDSLRKTVVAHVFGERTMATLGRLMSLLSPFDVVIWMTDGWPLYESRLKGKLHVISKRYTQRIERHNLNLRQHLARLGRKSLSFSKSVELHDKVIGHYLNIKHYQ</sequence>
<gene>
    <name type="primary">insB</name>
    <name type="ordered locus">HD_1970</name>
</gene>
<evidence type="ECO:0000250" key="1"/>
<evidence type="ECO:0000305" key="2"/>
<comment type="function">
    <text evidence="1">Absolutely required for transposition of IS1.</text>
</comment>
<comment type="similarity">
    <text evidence="2">Belongs to the transposase 27 family.</text>
</comment>
<accession>P59843</accession>
<organism>
    <name type="scientific">Haemophilus ducreyi (strain 35000HP / ATCC 700724)</name>
    <dbReference type="NCBI Taxonomy" id="233412"/>
    <lineage>
        <taxon>Bacteria</taxon>
        <taxon>Pseudomonadati</taxon>
        <taxon>Pseudomonadota</taxon>
        <taxon>Gammaproteobacteria</taxon>
        <taxon>Pasteurellales</taxon>
        <taxon>Pasteurellaceae</taxon>
        <taxon>Haemophilus</taxon>
    </lineage>
</organism>
<protein>
    <recommendedName>
        <fullName>Insertion element IS1 protein InsB</fullName>
    </recommendedName>
</protein>